<reference key="1">
    <citation type="journal article" date="2004" name="Proc. Natl. Acad. Sci. U.S.A.">
        <title>The diploid genome sequence of Candida albicans.</title>
        <authorList>
            <person name="Jones T."/>
            <person name="Federspiel N.A."/>
            <person name="Chibana H."/>
            <person name="Dungan J."/>
            <person name="Kalman S."/>
            <person name="Magee B.B."/>
            <person name="Newport G."/>
            <person name="Thorstenson Y.R."/>
            <person name="Agabian N."/>
            <person name="Magee P.T."/>
            <person name="Davis R.W."/>
            <person name="Scherer S."/>
        </authorList>
    </citation>
    <scope>NUCLEOTIDE SEQUENCE [LARGE SCALE GENOMIC DNA]</scope>
    <source>
        <strain>SC5314 / ATCC MYA-2876</strain>
    </source>
</reference>
<reference key="2">
    <citation type="journal article" date="2007" name="Genome Biol.">
        <title>Assembly of the Candida albicans genome into sixteen supercontigs aligned on the eight chromosomes.</title>
        <authorList>
            <person name="van het Hoog M."/>
            <person name="Rast T.J."/>
            <person name="Martchenko M."/>
            <person name="Grindle S."/>
            <person name="Dignard D."/>
            <person name="Hogues H."/>
            <person name="Cuomo C."/>
            <person name="Berriman M."/>
            <person name="Scherer S."/>
            <person name="Magee B.B."/>
            <person name="Whiteway M."/>
            <person name="Chibana H."/>
            <person name="Nantel A."/>
            <person name="Magee P.T."/>
        </authorList>
    </citation>
    <scope>GENOME REANNOTATION</scope>
    <source>
        <strain>SC5314 / ATCC MYA-2876</strain>
    </source>
</reference>
<reference key="3">
    <citation type="journal article" date="2013" name="Genome Biol.">
        <title>Assembly of a phased diploid Candida albicans genome facilitates allele-specific measurements and provides a simple model for repeat and indel structure.</title>
        <authorList>
            <person name="Muzzey D."/>
            <person name="Schwartz K."/>
            <person name="Weissman J.S."/>
            <person name="Sherlock G."/>
        </authorList>
    </citation>
    <scope>NUCLEOTIDE SEQUENCE [LARGE SCALE GENOMIC DNA]</scope>
    <scope>GENOME REANNOTATION</scope>
    <source>
        <strain>SC5314 / ATCC MYA-2876</strain>
    </source>
</reference>
<reference evidence="5 6 7" key="4">
    <citation type="journal article" date="2022" name="Sci. Adv.">
        <title>E-site drug specificity of the human pathogen Candida albicans ribosome.</title>
        <authorList>
            <person name="Zgadzay Y."/>
            <person name="Kolosova O."/>
            <person name="Stetsenko A."/>
            <person name="Wu C."/>
            <person name="Bruchlen D."/>
            <person name="Usachev K."/>
            <person name="Validov S."/>
            <person name="Jenner L."/>
            <person name="Rogachev A."/>
            <person name="Yusupova G."/>
            <person name="Sachs M.S."/>
            <person name="Guskov A."/>
            <person name="Yusupov M."/>
        </authorList>
    </citation>
    <scope>STRUCTURE BY ELECTRON MICROSCOPY (2.32 ANGSTROMS) OF THE 80S RIBOSOME</scope>
    <scope>SUBUNIT</scope>
    <scope>COFACTOR</scope>
</reference>
<protein>
    <recommendedName>
        <fullName evidence="2">Large ribosomal subunit protein eL40</fullName>
    </recommendedName>
    <alternativeName>
        <fullName>60S ribosomal protein L40-B</fullName>
    </alternativeName>
</protein>
<keyword id="KW-0002">3D-structure</keyword>
<keyword id="KW-0963">Cytoplasm</keyword>
<keyword id="KW-1185">Reference proteome</keyword>
<keyword id="KW-0687">Ribonucleoprotein</keyword>
<keyword id="KW-0689">Ribosomal protein</keyword>
<keyword id="KW-0862">Zinc</keyword>
<organism>
    <name type="scientific">Candida albicans (strain SC5314 / ATCC MYA-2876)</name>
    <name type="common">Yeast</name>
    <dbReference type="NCBI Taxonomy" id="237561"/>
    <lineage>
        <taxon>Eukaryota</taxon>
        <taxon>Fungi</taxon>
        <taxon>Dikarya</taxon>
        <taxon>Ascomycota</taxon>
        <taxon>Saccharomycotina</taxon>
        <taxon>Pichiomycetes</taxon>
        <taxon>Debaryomycetaceae</taxon>
        <taxon>Candida/Lodderomyces clade</taxon>
        <taxon>Candida</taxon>
    </lineage>
</organism>
<gene>
    <name evidence="2" type="primary">RPL40B</name>
    <name type="ordered locus">orf19.4684.2</name>
    <name type="ORF">CAALFM_C401050CA</name>
</gene>
<dbReference type="EMBL" id="CP017626">
    <property type="protein sequence ID" value="AOW28892.1"/>
    <property type="molecule type" value="Genomic_DNA"/>
</dbReference>
<dbReference type="RefSeq" id="XP_019330903.1">
    <property type="nucleotide sequence ID" value="XM_019475358.1"/>
</dbReference>
<dbReference type="PDB" id="7PZY">
    <property type="method" value="EM"/>
    <property type="resolution" value="2.32 A"/>
    <property type="chains" value="AN=1-52"/>
</dbReference>
<dbReference type="PDB" id="7Q08">
    <property type="method" value="EM"/>
    <property type="resolution" value="2.56 A"/>
    <property type="chains" value="AN=1-52"/>
</dbReference>
<dbReference type="PDB" id="7Q0F">
    <property type="method" value="EM"/>
    <property type="resolution" value="2.64 A"/>
    <property type="chains" value="AN=1-52"/>
</dbReference>
<dbReference type="PDB" id="7Q0P">
    <property type="method" value="EM"/>
    <property type="resolution" value="2.77 A"/>
    <property type="chains" value="AN=1-52"/>
</dbReference>
<dbReference type="PDB" id="7Q0R">
    <property type="method" value="EM"/>
    <property type="resolution" value="2.67 A"/>
    <property type="chains" value="AN=1-52"/>
</dbReference>
<dbReference type="PDB" id="8C3A">
    <property type="method" value="X-ray"/>
    <property type="resolution" value="3.00 A"/>
    <property type="chains" value="AN/CH=1-52"/>
</dbReference>
<dbReference type="PDB" id="8CQ7">
    <property type="method" value="X-ray"/>
    <property type="resolution" value="3.20 A"/>
    <property type="chains" value="AN/CH=1-52"/>
</dbReference>
<dbReference type="PDB" id="8CQW">
    <property type="method" value="X-ray"/>
    <property type="resolution" value="3.05 A"/>
    <property type="chains" value="AN/CH=1-52"/>
</dbReference>
<dbReference type="PDB" id="8CRE">
    <property type="method" value="X-ray"/>
    <property type="resolution" value="3.00 A"/>
    <property type="chains" value="AN/CH=1-52"/>
</dbReference>
<dbReference type="PDB" id="8OEQ">
    <property type="method" value="X-ray"/>
    <property type="resolution" value="3.30 A"/>
    <property type="chains" value="AN/CH=1-52"/>
</dbReference>
<dbReference type="PDB" id="8OGJ">
    <property type="method" value="EM"/>
    <property type="resolution" value="3.10 A"/>
    <property type="chains" value="AN=1-52"/>
</dbReference>
<dbReference type="PDB" id="8OH6">
    <property type="method" value="X-ray"/>
    <property type="resolution" value="3.35 A"/>
    <property type="chains" value="AN/CH=1-52"/>
</dbReference>
<dbReference type="PDB" id="8OI5">
    <property type="method" value="X-ray"/>
    <property type="resolution" value="2.90 A"/>
    <property type="chains" value="AN/CH=1-52"/>
</dbReference>
<dbReference type="PDB" id="8OJ3">
    <property type="method" value="X-ray"/>
    <property type="resolution" value="3.50 A"/>
    <property type="chains" value="AN/CH=1-52"/>
</dbReference>
<dbReference type="PDB" id="8Q5I">
    <property type="method" value="EM"/>
    <property type="resolution" value="2.45 A"/>
    <property type="chains" value="AN=1-52"/>
</dbReference>
<dbReference type="PDBsum" id="7PZY"/>
<dbReference type="PDBsum" id="7Q08"/>
<dbReference type="PDBsum" id="7Q0F"/>
<dbReference type="PDBsum" id="7Q0P"/>
<dbReference type="PDBsum" id="7Q0R"/>
<dbReference type="PDBsum" id="8C3A"/>
<dbReference type="PDBsum" id="8CQ7"/>
<dbReference type="PDBsum" id="8CQW"/>
<dbReference type="PDBsum" id="8CRE"/>
<dbReference type="PDBsum" id="8OEQ"/>
<dbReference type="PDBsum" id="8OGJ"/>
<dbReference type="PDBsum" id="8OH6"/>
<dbReference type="PDBsum" id="8OI5"/>
<dbReference type="PDBsum" id="8OJ3"/>
<dbReference type="PDBsum" id="8Q5I"/>
<dbReference type="EMDB" id="EMD-16874"/>
<dbReference type="SMR" id="A0A1D8PL68"/>
<dbReference type="STRING" id="237561.A0A1D8PL68"/>
<dbReference type="EnsemblFungi" id="C4_01050C_A-T">
    <property type="protein sequence ID" value="C4_01050C_A-T-p1"/>
    <property type="gene ID" value="C4_01050C_A"/>
</dbReference>
<dbReference type="GeneID" id="30515232"/>
<dbReference type="KEGG" id="cal:CAALFM_C401050CA"/>
<dbReference type="CGD" id="CAL0000176824">
    <property type="gene designation" value="RPL40B"/>
</dbReference>
<dbReference type="VEuPathDB" id="FungiDB:C4_01050C_A"/>
<dbReference type="eggNOG" id="KOG0003">
    <property type="taxonomic scope" value="Eukaryota"/>
</dbReference>
<dbReference type="InParanoid" id="A0A1D8PL68"/>
<dbReference type="OMA" id="KGATNCR"/>
<dbReference type="OrthoDB" id="428577at2759"/>
<dbReference type="Proteomes" id="UP000000559">
    <property type="component" value="Chromosome 4"/>
</dbReference>
<dbReference type="GO" id="GO:0005737">
    <property type="term" value="C:cytoplasm"/>
    <property type="evidence" value="ECO:0007669"/>
    <property type="project" value="UniProtKB-SubCell"/>
</dbReference>
<dbReference type="GO" id="GO:1990904">
    <property type="term" value="C:ribonucleoprotein complex"/>
    <property type="evidence" value="ECO:0007669"/>
    <property type="project" value="UniProtKB-KW"/>
</dbReference>
<dbReference type="GO" id="GO:0005840">
    <property type="term" value="C:ribosome"/>
    <property type="evidence" value="ECO:0007669"/>
    <property type="project" value="UniProtKB-KW"/>
</dbReference>
<dbReference type="GO" id="GO:0003735">
    <property type="term" value="F:structural constituent of ribosome"/>
    <property type="evidence" value="ECO:0007669"/>
    <property type="project" value="InterPro"/>
</dbReference>
<dbReference type="GO" id="GO:0006412">
    <property type="term" value="P:translation"/>
    <property type="evidence" value="ECO:0007669"/>
    <property type="project" value="InterPro"/>
</dbReference>
<dbReference type="FunFam" id="4.10.1060.50:FF:000001">
    <property type="entry name" value="ubiquitin-60S ribosomal protein L40"/>
    <property type="match status" value="1"/>
</dbReference>
<dbReference type="Gene3D" id="4.10.1060.50">
    <property type="match status" value="1"/>
</dbReference>
<dbReference type="InterPro" id="IPR001975">
    <property type="entry name" value="Ribosomal_eL40_dom"/>
</dbReference>
<dbReference type="InterPro" id="IPR038587">
    <property type="entry name" value="Ribosomal_eL40_sf"/>
</dbReference>
<dbReference type="InterPro" id="IPR011332">
    <property type="entry name" value="Ribosomal_zn-bd"/>
</dbReference>
<dbReference type="Pfam" id="PF01020">
    <property type="entry name" value="Ribosomal_L40e"/>
    <property type="match status" value="1"/>
</dbReference>
<dbReference type="SMART" id="SM01377">
    <property type="entry name" value="Ribosomal_L40e"/>
    <property type="match status" value="1"/>
</dbReference>
<dbReference type="SUPFAM" id="SSF57829">
    <property type="entry name" value="Zn-binding ribosomal proteins"/>
    <property type="match status" value="1"/>
</dbReference>
<name>RL40B_CANAL</name>
<comment type="function">
    <text evidence="4">Component of the ribosome, a large ribonucleoprotein complex responsible for the synthesis of proteins in the cell. The small ribosomal subunit (SSU) binds messenger RNAs (mRNAs) and translates the encoded message by selecting cognate aminoacyl-transfer RNA (tRNA) molecules. The large subunit (LSU) contains the ribosomal catalytic site termed the peptidyl transferase center (PTC), which catalyzes the formation of peptide bonds, thereby polymerizing the amino acids delivered by tRNAs into a polypeptide chain. The nascent polypeptides leave the ribosome through a tunnel in the LSU and interact with protein factors that function in enzymatic processing, targeting, and the membrane insertion of nascent chains at the exit of the ribosomal tunnel.</text>
</comment>
<comment type="cofactor">
    <cofactor evidence="1">
        <name>Zn(2+)</name>
        <dbReference type="ChEBI" id="CHEBI:29105"/>
    </cofactor>
</comment>
<comment type="subunit">
    <text evidence="1">Component of the large ribosomal subunit (PubMed:35613268). Mature ribosomes consist of a small (40S) and a large (60S) subunit (PubMed:35613268). The 40S subunit contains about 32 different proteins and 1 molecule of RNA (18S) (PubMed:35613268). The 60S subunit contains 45 different proteins and 3 molecules of RNA (25S, 5.8S and 5S) (PubMed:35613268).</text>
</comment>
<comment type="subcellular location">
    <subcellularLocation>
        <location evidence="4">Cytoplasm</location>
    </subcellularLocation>
</comment>
<comment type="similarity">
    <text evidence="3">Belongs to the eukaryotic ribosomal protein eL40 family.</text>
</comment>
<proteinExistence type="evidence at protein level"/>
<evidence type="ECO:0000269" key="1">
    <source>
    </source>
</evidence>
<evidence type="ECO:0000303" key="2">
    <source>
    </source>
</evidence>
<evidence type="ECO:0000305" key="3"/>
<evidence type="ECO:0000305" key="4">
    <source>
    </source>
</evidence>
<evidence type="ECO:0007744" key="5">
    <source>
        <dbReference type="PDB" id="7PZY"/>
    </source>
</evidence>
<evidence type="ECO:0007744" key="6">
    <source>
        <dbReference type="PDB" id="7Q0F"/>
    </source>
</evidence>
<evidence type="ECO:0007744" key="7">
    <source>
        <dbReference type="PDB" id="7Q0P"/>
    </source>
</evidence>
<feature type="chain" id="PRO_0000456500" description="Large ribosomal subunit protein eL40">
    <location>
        <begin position="1"/>
        <end position="52"/>
    </location>
</feature>
<feature type="binding site" evidence="1 5">
    <location>
        <position position="20"/>
    </location>
    <ligand>
        <name>Zn(2+)</name>
        <dbReference type="ChEBI" id="CHEBI:29105"/>
        <label>101</label>
    </ligand>
</feature>
<feature type="binding site" evidence="1 5">
    <location>
        <position position="23"/>
    </location>
    <ligand>
        <name>Zn(2+)</name>
        <dbReference type="ChEBI" id="CHEBI:29105"/>
        <label>101</label>
    </ligand>
</feature>
<feature type="binding site" evidence="1 5">
    <location>
        <position position="34"/>
    </location>
    <ligand>
        <name>Zn(2+)</name>
        <dbReference type="ChEBI" id="CHEBI:29105"/>
        <label>101</label>
    </ligand>
</feature>
<feature type="binding site" evidence="1 5">
    <location>
        <position position="39"/>
    </location>
    <ligand>
        <name>Zn(2+)</name>
        <dbReference type="ChEBI" id="CHEBI:29105"/>
        <label>101</label>
    </ligand>
</feature>
<accession>A0A1D8PL68</accession>
<sequence>MIEPSLKALASKYNCEKSICRKCYARLPPRATNCRKRKCGHTNQLRPKKKLK</sequence>